<keyword id="KW-0067">ATP-binding</keyword>
<keyword id="KW-0418">Kinase</keyword>
<keyword id="KW-0545">Nucleotide biosynthesis</keyword>
<keyword id="KW-0547">Nucleotide-binding</keyword>
<keyword id="KW-0808">Transferase</keyword>
<gene>
    <name evidence="1" type="primary">tmk</name>
    <name type="ordered locus">RT0679</name>
</gene>
<comment type="function">
    <text evidence="1">Phosphorylation of dTMP to form dTDP in both de novo and salvage pathways of dTTP synthesis.</text>
</comment>
<comment type="catalytic activity">
    <reaction evidence="1">
        <text>dTMP + ATP = dTDP + ADP</text>
        <dbReference type="Rhea" id="RHEA:13517"/>
        <dbReference type="ChEBI" id="CHEBI:30616"/>
        <dbReference type="ChEBI" id="CHEBI:58369"/>
        <dbReference type="ChEBI" id="CHEBI:63528"/>
        <dbReference type="ChEBI" id="CHEBI:456216"/>
        <dbReference type="EC" id="2.7.4.9"/>
    </reaction>
</comment>
<comment type="similarity">
    <text evidence="1">Belongs to the thymidylate kinase family.</text>
</comment>
<sequence length="203" mass="23620">MNKLTQGKFITFEGMDGIGKSTQSKMLYEYLKSQKIPVILTREVGGTFVAEKMREILVHEELLPMSELLQAMAARYDHMVRKIIPALKDGYIVICDRFIDSTACYQGLELENGIDLVYSLHTTLMPSLMPDITFFIDVEPDTAIKRVNSRNMSNKFDRRRIDFYKKIYSCFQELSHRFPERIKTIKASHLNPLEVHELIQKHL</sequence>
<name>KTHY_RICTY</name>
<proteinExistence type="inferred from homology"/>
<feature type="chain" id="PRO_0000155332" description="Thymidylate kinase">
    <location>
        <begin position="1"/>
        <end position="203"/>
    </location>
</feature>
<feature type="binding site" evidence="1">
    <location>
        <begin position="14"/>
        <end position="21"/>
    </location>
    <ligand>
        <name>ATP</name>
        <dbReference type="ChEBI" id="CHEBI:30616"/>
    </ligand>
</feature>
<protein>
    <recommendedName>
        <fullName evidence="1">Thymidylate kinase</fullName>
        <ecNumber evidence="1">2.7.4.9</ecNumber>
    </recommendedName>
    <alternativeName>
        <fullName evidence="1">dTMP kinase</fullName>
    </alternativeName>
</protein>
<accession>Q68W53</accession>
<dbReference type="EC" id="2.7.4.9" evidence="1"/>
<dbReference type="EMBL" id="AE017197">
    <property type="protein sequence ID" value="AAU04139.1"/>
    <property type="molecule type" value="Genomic_DNA"/>
</dbReference>
<dbReference type="RefSeq" id="WP_011191116.1">
    <property type="nucleotide sequence ID" value="NC_006142.1"/>
</dbReference>
<dbReference type="SMR" id="Q68W53"/>
<dbReference type="KEGG" id="rty:RT0679"/>
<dbReference type="eggNOG" id="COG0125">
    <property type="taxonomic scope" value="Bacteria"/>
</dbReference>
<dbReference type="HOGENOM" id="CLU_049131_0_2_5"/>
<dbReference type="OrthoDB" id="9774907at2"/>
<dbReference type="Proteomes" id="UP000000604">
    <property type="component" value="Chromosome"/>
</dbReference>
<dbReference type="GO" id="GO:0005829">
    <property type="term" value="C:cytosol"/>
    <property type="evidence" value="ECO:0007669"/>
    <property type="project" value="TreeGrafter"/>
</dbReference>
<dbReference type="GO" id="GO:0005524">
    <property type="term" value="F:ATP binding"/>
    <property type="evidence" value="ECO:0007669"/>
    <property type="project" value="UniProtKB-UniRule"/>
</dbReference>
<dbReference type="GO" id="GO:0004798">
    <property type="term" value="F:dTMP kinase activity"/>
    <property type="evidence" value="ECO:0007669"/>
    <property type="project" value="UniProtKB-UniRule"/>
</dbReference>
<dbReference type="GO" id="GO:0006233">
    <property type="term" value="P:dTDP biosynthetic process"/>
    <property type="evidence" value="ECO:0007669"/>
    <property type="project" value="InterPro"/>
</dbReference>
<dbReference type="GO" id="GO:0006235">
    <property type="term" value="P:dTTP biosynthetic process"/>
    <property type="evidence" value="ECO:0007669"/>
    <property type="project" value="UniProtKB-UniRule"/>
</dbReference>
<dbReference type="GO" id="GO:0006227">
    <property type="term" value="P:dUDP biosynthetic process"/>
    <property type="evidence" value="ECO:0007669"/>
    <property type="project" value="TreeGrafter"/>
</dbReference>
<dbReference type="CDD" id="cd01672">
    <property type="entry name" value="TMPK"/>
    <property type="match status" value="1"/>
</dbReference>
<dbReference type="FunFam" id="3.40.50.300:FF:000225">
    <property type="entry name" value="Thymidylate kinase"/>
    <property type="match status" value="1"/>
</dbReference>
<dbReference type="Gene3D" id="3.40.50.300">
    <property type="entry name" value="P-loop containing nucleotide triphosphate hydrolases"/>
    <property type="match status" value="1"/>
</dbReference>
<dbReference type="HAMAP" id="MF_00165">
    <property type="entry name" value="Thymidylate_kinase"/>
    <property type="match status" value="1"/>
</dbReference>
<dbReference type="InterPro" id="IPR027417">
    <property type="entry name" value="P-loop_NTPase"/>
</dbReference>
<dbReference type="InterPro" id="IPR039430">
    <property type="entry name" value="Thymidylate_kin-like_dom"/>
</dbReference>
<dbReference type="InterPro" id="IPR018095">
    <property type="entry name" value="Thymidylate_kin_CS"/>
</dbReference>
<dbReference type="InterPro" id="IPR018094">
    <property type="entry name" value="Thymidylate_kinase"/>
</dbReference>
<dbReference type="NCBIfam" id="TIGR00041">
    <property type="entry name" value="DTMP_kinase"/>
    <property type="match status" value="1"/>
</dbReference>
<dbReference type="PANTHER" id="PTHR10344">
    <property type="entry name" value="THYMIDYLATE KINASE"/>
    <property type="match status" value="1"/>
</dbReference>
<dbReference type="PANTHER" id="PTHR10344:SF4">
    <property type="entry name" value="UMP-CMP KINASE 2, MITOCHONDRIAL"/>
    <property type="match status" value="1"/>
</dbReference>
<dbReference type="Pfam" id="PF02223">
    <property type="entry name" value="Thymidylate_kin"/>
    <property type="match status" value="1"/>
</dbReference>
<dbReference type="SUPFAM" id="SSF52540">
    <property type="entry name" value="P-loop containing nucleoside triphosphate hydrolases"/>
    <property type="match status" value="1"/>
</dbReference>
<dbReference type="PROSITE" id="PS01331">
    <property type="entry name" value="THYMIDYLATE_KINASE"/>
    <property type="match status" value="1"/>
</dbReference>
<organism>
    <name type="scientific">Rickettsia typhi (strain ATCC VR-144 / Wilmington)</name>
    <dbReference type="NCBI Taxonomy" id="257363"/>
    <lineage>
        <taxon>Bacteria</taxon>
        <taxon>Pseudomonadati</taxon>
        <taxon>Pseudomonadota</taxon>
        <taxon>Alphaproteobacteria</taxon>
        <taxon>Rickettsiales</taxon>
        <taxon>Rickettsiaceae</taxon>
        <taxon>Rickettsieae</taxon>
        <taxon>Rickettsia</taxon>
        <taxon>typhus group</taxon>
    </lineage>
</organism>
<evidence type="ECO:0000255" key="1">
    <source>
        <dbReference type="HAMAP-Rule" id="MF_00165"/>
    </source>
</evidence>
<reference key="1">
    <citation type="journal article" date="2004" name="J. Bacteriol.">
        <title>Complete genome sequence of Rickettsia typhi and comparison with sequences of other Rickettsiae.</title>
        <authorList>
            <person name="McLeod M.P."/>
            <person name="Qin X."/>
            <person name="Karpathy S.E."/>
            <person name="Gioia J."/>
            <person name="Highlander S.K."/>
            <person name="Fox G.E."/>
            <person name="McNeill T.Z."/>
            <person name="Jiang H."/>
            <person name="Muzny D."/>
            <person name="Jacob L.S."/>
            <person name="Hawes A.C."/>
            <person name="Sodergren E."/>
            <person name="Gill R."/>
            <person name="Hume J."/>
            <person name="Morgan M."/>
            <person name="Fan G."/>
            <person name="Amin A.G."/>
            <person name="Gibbs R.A."/>
            <person name="Hong C."/>
            <person name="Yu X.-J."/>
            <person name="Walker D.H."/>
            <person name="Weinstock G.M."/>
        </authorList>
    </citation>
    <scope>NUCLEOTIDE SEQUENCE [LARGE SCALE GENOMIC DNA]</scope>
    <source>
        <strain>ATCC VR-144 / Wilmington</strain>
    </source>
</reference>